<sequence length="491" mass="53598">MNTQQLAKLRSIVPEMRRVRHIHFVGIGGAGMGGIAEVLANEGYQISGSDLAPNPVTQQLMNLGATIYFNHRPENVRDASVVVVSSAISADNPEIVAAHEARIPVIRRAEMLAELMRFRHGIAIAGTHGKTTTTAMVSSIYAEAGLDPTFVNGGLVKAAGVHARLGHGRYLIAEADESDASFLHLQPMVAIVTNIEADHMDTYQGDFENLKQTFINFLHNLPFYGRAVMCVDDPVIRELLPRVGRQTTTYGFSEDADVRVEDYQQIGPQGHFTLLRQDKEPMRVTLNAPGRHNALNAAAAVAVATEEGIDDEAILRALESFQGTGRRFDFLGEFPLEPVNGKSGTAMLVDDYGHHPTEVDATIKAARAGWPDKNLVMLFQPHRFTRTRDLYDDFANVLTQVDTLLMLEVYPAGEAPIPGADSRSLCRTIRGRGKIDPILVPDPAQVAEMLAPVLTGNDLILVQGAGNIGKIARSLAEIKLKPQTPEEEQHD</sequence>
<name>MURC_ECOSM</name>
<organism>
    <name type="scientific">Escherichia coli (strain SMS-3-5 / SECEC)</name>
    <dbReference type="NCBI Taxonomy" id="439855"/>
    <lineage>
        <taxon>Bacteria</taxon>
        <taxon>Pseudomonadati</taxon>
        <taxon>Pseudomonadota</taxon>
        <taxon>Gammaproteobacteria</taxon>
        <taxon>Enterobacterales</taxon>
        <taxon>Enterobacteriaceae</taxon>
        <taxon>Escherichia</taxon>
    </lineage>
</organism>
<accession>B1LG28</accession>
<protein>
    <recommendedName>
        <fullName evidence="1">UDP-N-acetylmuramate--L-alanine ligase</fullName>
        <ecNumber evidence="1">6.3.2.8</ecNumber>
    </recommendedName>
    <alternativeName>
        <fullName evidence="1">UDP-N-acetylmuramoyl-L-alanine synthetase</fullName>
    </alternativeName>
</protein>
<dbReference type="EC" id="6.3.2.8" evidence="1"/>
<dbReference type="EMBL" id="CP000970">
    <property type="protein sequence ID" value="ACB19590.1"/>
    <property type="molecule type" value="Genomic_DNA"/>
</dbReference>
<dbReference type="RefSeq" id="WP_001096048.1">
    <property type="nucleotide sequence ID" value="NC_010498.1"/>
</dbReference>
<dbReference type="SMR" id="B1LG28"/>
<dbReference type="GeneID" id="75169991"/>
<dbReference type="KEGG" id="ecm:EcSMS35_0096"/>
<dbReference type="HOGENOM" id="CLU_028104_2_2_6"/>
<dbReference type="UniPathway" id="UPA00219"/>
<dbReference type="Proteomes" id="UP000007011">
    <property type="component" value="Chromosome"/>
</dbReference>
<dbReference type="GO" id="GO:0005737">
    <property type="term" value="C:cytoplasm"/>
    <property type="evidence" value="ECO:0007669"/>
    <property type="project" value="UniProtKB-SubCell"/>
</dbReference>
<dbReference type="GO" id="GO:0005524">
    <property type="term" value="F:ATP binding"/>
    <property type="evidence" value="ECO:0007669"/>
    <property type="project" value="UniProtKB-UniRule"/>
</dbReference>
<dbReference type="GO" id="GO:0008763">
    <property type="term" value="F:UDP-N-acetylmuramate-L-alanine ligase activity"/>
    <property type="evidence" value="ECO:0007669"/>
    <property type="project" value="UniProtKB-UniRule"/>
</dbReference>
<dbReference type="GO" id="GO:0051301">
    <property type="term" value="P:cell division"/>
    <property type="evidence" value="ECO:0007669"/>
    <property type="project" value="UniProtKB-KW"/>
</dbReference>
<dbReference type="GO" id="GO:0071555">
    <property type="term" value="P:cell wall organization"/>
    <property type="evidence" value="ECO:0007669"/>
    <property type="project" value="UniProtKB-KW"/>
</dbReference>
<dbReference type="GO" id="GO:0009252">
    <property type="term" value="P:peptidoglycan biosynthetic process"/>
    <property type="evidence" value="ECO:0007669"/>
    <property type="project" value="UniProtKB-UniRule"/>
</dbReference>
<dbReference type="GO" id="GO:0008360">
    <property type="term" value="P:regulation of cell shape"/>
    <property type="evidence" value="ECO:0007669"/>
    <property type="project" value="UniProtKB-KW"/>
</dbReference>
<dbReference type="FunFam" id="3.40.1190.10:FF:000001">
    <property type="entry name" value="UDP-N-acetylmuramate--L-alanine ligase"/>
    <property type="match status" value="1"/>
</dbReference>
<dbReference type="FunFam" id="3.40.50.720:FF:000046">
    <property type="entry name" value="UDP-N-acetylmuramate--L-alanine ligase"/>
    <property type="match status" value="1"/>
</dbReference>
<dbReference type="FunFam" id="3.90.190.20:FF:000001">
    <property type="entry name" value="UDP-N-acetylmuramate--L-alanine ligase"/>
    <property type="match status" value="1"/>
</dbReference>
<dbReference type="Gene3D" id="3.90.190.20">
    <property type="entry name" value="Mur ligase, C-terminal domain"/>
    <property type="match status" value="1"/>
</dbReference>
<dbReference type="Gene3D" id="3.40.1190.10">
    <property type="entry name" value="Mur-like, catalytic domain"/>
    <property type="match status" value="1"/>
</dbReference>
<dbReference type="Gene3D" id="3.40.50.720">
    <property type="entry name" value="NAD(P)-binding Rossmann-like Domain"/>
    <property type="match status" value="1"/>
</dbReference>
<dbReference type="HAMAP" id="MF_00046">
    <property type="entry name" value="MurC"/>
    <property type="match status" value="1"/>
</dbReference>
<dbReference type="InterPro" id="IPR036565">
    <property type="entry name" value="Mur-like_cat_sf"/>
</dbReference>
<dbReference type="InterPro" id="IPR004101">
    <property type="entry name" value="Mur_ligase_C"/>
</dbReference>
<dbReference type="InterPro" id="IPR036615">
    <property type="entry name" value="Mur_ligase_C_dom_sf"/>
</dbReference>
<dbReference type="InterPro" id="IPR013221">
    <property type="entry name" value="Mur_ligase_cen"/>
</dbReference>
<dbReference type="InterPro" id="IPR000713">
    <property type="entry name" value="Mur_ligase_N"/>
</dbReference>
<dbReference type="InterPro" id="IPR050061">
    <property type="entry name" value="MurCDEF_pg_biosynth"/>
</dbReference>
<dbReference type="InterPro" id="IPR005758">
    <property type="entry name" value="UDP-N-AcMur_Ala_ligase_MurC"/>
</dbReference>
<dbReference type="NCBIfam" id="TIGR01082">
    <property type="entry name" value="murC"/>
    <property type="match status" value="1"/>
</dbReference>
<dbReference type="PANTHER" id="PTHR43445:SF3">
    <property type="entry name" value="UDP-N-ACETYLMURAMATE--L-ALANINE LIGASE"/>
    <property type="match status" value="1"/>
</dbReference>
<dbReference type="PANTHER" id="PTHR43445">
    <property type="entry name" value="UDP-N-ACETYLMURAMATE--L-ALANINE LIGASE-RELATED"/>
    <property type="match status" value="1"/>
</dbReference>
<dbReference type="Pfam" id="PF01225">
    <property type="entry name" value="Mur_ligase"/>
    <property type="match status" value="1"/>
</dbReference>
<dbReference type="Pfam" id="PF02875">
    <property type="entry name" value="Mur_ligase_C"/>
    <property type="match status" value="1"/>
</dbReference>
<dbReference type="Pfam" id="PF08245">
    <property type="entry name" value="Mur_ligase_M"/>
    <property type="match status" value="1"/>
</dbReference>
<dbReference type="SUPFAM" id="SSF51984">
    <property type="entry name" value="MurCD N-terminal domain"/>
    <property type="match status" value="1"/>
</dbReference>
<dbReference type="SUPFAM" id="SSF53623">
    <property type="entry name" value="MurD-like peptide ligases, catalytic domain"/>
    <property type="match status" value="1"/>
</dbReference>
<dbReference type="SUPFAM" id="SSF53244">
    <property type="entry name" value="MurD-like peptide ligases, peptide-binding domain"/>
    <property type="match status" value="1"/>
</dbReference>
<proteinExistence type="inferred from homology"/>
<reference key="1">
    <citation type="journal article" date="2008" name="J. Bacteriol.">
        <title>Insights into the environmental resistance gene pool from the genome sequence of the multidrug-resistant environmental isolate Escherichia coli SMS-3-5.</title>
        <authorList>
            <person name="Fricke W.F."/>
            <person name="Wright M.S."/>
            <person name="Lindell A.H."/>
            <person name="Harkins D.M."/>
            <person name="Baker-Austin C."/>
            <person name="Ravel J."/>
            <person name="Stepanauskas R."/>
        </authorList>
    </citation>
    <scope>NUCLEOTIDE SEQUENCE [LARGE SCALE GENOMIC DNA]</scope>
    <source>
        <strain>SMS-3-5 / SECEC</strain>
    </source>
</reference>
<keyword id="KW-0067">ATP-binding</keyword>
<keyword id="KW-0131">Cell cycle</keyword>
<keyword id="KW-0132">Cell division</keyword>
<keyword id="KW-0133">Cell shape</keyword>
<keyword id="KW-0961">Cell wall biogenesis/degradation</keyword>
<keyword id="KW-0963">Cytoplasm</keyword>
<keyword id="KW-0436">Ligase</keyword>
<keyword id="KW-0547">Nucleotide-binding</keyword>
<keyword id="KW-0573">Peptidoglycan synthesis</keyword>
<comment type="function">
    <text evidence="1">Cell wall formation.</text>
</comment>
<comment type="catalytic activity">
    <reaction evidence="1">
        <text>UDP-N-acetyl-alpha-D-muramate + L-alanine + ATP = UDP-N-acetyl-alpha-D-muramoyl-L-alanine + ADP + phosphate + H(+)</text>
        <dbReference type="Rhea" id="RHEA:23372"/>
        <dbReference type="ChEBI" id="CHEBI:15378"/>
        <dbReference type="ChEBI" id="CHEBI:30616"/>
        <dbReference type="ChEBI" id="CHEBI:43474"/>
        <dbReference type="ChEBI" id="CHEBI:57972"/>
        <dbReference type="ChEBI" id="CHEBI:70757"/>
        <dbReference type="ChEBI" id="CHEBI:83898"/>
        <dbReference type="ChEBI" id="CHEBI:456216"/>
        <dbReference type="EC" id="6.3.2.8"/>
    </reaction>
</comment>
<comment type="pathway">
    <text evidence="1">Cell wall biogenesis; peptidoglycan biosynthesis.</text>
</comment>
<comment type="subcellular location">
    <subcellularLocation>
        <location evidence="1">Cytoplasm</location>
    </subcellularLocation>
</comment>
<comment type="similarity">
    <text evidence="1">Belongs to the MurCDEF family.</text>
</comment>
<gene>
    <name evidence="1" type="primary">murC</name>
    <name type="ordered locus">EcSMS35_0096</name>
</gene>
<feature type="chain" id="PRO_1000116625" description="UDP-N-acetylmuramate--L-alanine ligase">
    <location>
        <begin position="1"/>
        <end position="491"/>
    </location>
</feature>
<feature type="binding site" evidence="1">
    <location>
        <begin position="126"/>
        <end position="132"/>
    </location>
    <ligand>
        <name>ATP</name>
        <dbReference type="ChEBI" id="CHEBI:30616"/>
    </ligand>
</feature>
<evidence type="ECO:0000255" key="1">
    <source>
        <dbReference type="HAMAP-Rule" id="MF_00046"/>
    </source>
</evidence>